<sequence>MKPLIAIVGRPNVGKSTLFNRLVGRRKAMVDDMPGVTRDRNYADVNRFDVPFILIDTGGFEPETSDRLLQQMREQSQLAMDEADLILFVMDGRDGLTPADVEVVEMLRRVNKPVFYVVNKIDGDRQENAAGDFYSLGIEQIFTISAEHNRGVNDLMEEVIAALPNKTAPAVDEEVTRIAVIGRPNVGKSTLVNRLLGVERVVANPTPGTTRDSIDTYFNCNKKRYLLIDTAGIRRKGKTTEKIEKYSVVDSLRSIERADVVLIVIDAEEGVTEQDTKIAGYAFEAGRGCIFVVNKWDAISKDNASMGIFVEKIRMEFKYLPFAPIVFVSAKTGQRLGKIMTEVDSVMEQFAKRISTSDLNRVFSKAVEEHHAPLYQGRRVKFYFATQVGTKPPSIVIFTNRPDGVHFSYERYIINRFRDAFGFTGTPMRLLFKGREGRKRG</sequence>
<protein>
    <recommendedName>
        <fullName evidence="1">GTPase Der</fullName>
    </recommendedName>
    <alternativeName>
        <fullName evidence="1">GTP-binding protein EngA</fullName>
    </alternativeName>
</protein>
<evidence type="ECO:0000255" key="1">
    <source>
        <dbReference type="HAMAP-Rule" id="MF_00195"/>
    </source>
</evidence>
<organism>
    <name type="scientific">Geotalea daltonii (strain DSM 22248 / JCM 15807 / FRC-32)</name>
    <name type="common">Geobacter daltonii</name>
    <dbReference type="NCBI Taxonomy" id="316067"/>
    <lineage>
        <taxon>Bacteria</taxon>
        <taxon>Pseudomonadati</taxon>
        <taxon>Thermodesulfobacteriota</taxon>
        <taxon>Desulfuromonadia</taxon>
        <taxon>Geobacterales</taxon>
        <taxon>Geobacteraceae</taxon>
        <taxon>Geotalea</taxon>
    </lineage>
</organism>
<reference key="1">
    <citation type="submission" date="2009-01" db="EMBL/GenBank/DDBJ databases">
        <title>Complete sequence of Geobacter sp. FRC-32.</title>
        <authorList>
            <consortium name="US DOE Joint Genome Institute"/>
            <person name="Lucas S."/>
            <person name="Copeland A."/>
            <person name="Lapidus A."/>
            <person name="Glavina del Rio T."/>
            <person name="Dalin E."/>
            <person name="Tice H."/>
            <person name="Bruce D."/>
            <person name="Goodwin L."/>
            <person name="Pitluck S."/>
            <person name="Saunders E."/>
            <person name="Brettin T."/>
            <person name="Detter J.C."/>
            <person name="Han C."/>
            <person name="Larimer F."/>
            <person name="Land M."/>
            <person name="Hauser L."/>
            <person name="Kyrpides N."/>
            <person name="Ovchinnikova G."/>
            <person name="Kostka J."/>
            <person name="Richardson P."/>
        </authorList>
    </citation>
    <scope>NUCLEOTIDE SEQUENCE [LARGE SCALE GENOMIC DNA]</scope>
    <source>
        <strain>DSM 22248 / JCM 15807 / FRC-32</strain>
    </source>
</reference>
<comment type="function">
    <text evidence="1">GTPase that plays an essential role in the late steps of ribosome biogenesis.</text>
</comment>
<comment type="subunit">
    <text evidence="1">Associates with the 50S ribosomal subunit.</text>
</comment>
<comment type="similarity">
    <text evidence="1">Belongs to the TRAFAC class TrmE-Era-EngA-EngB-Septin-like GTPase superfamily. EngA (Der) GTPase family.</text>
</comment>
<accession>B9M914</accession>
<dbReference type="EMBL" id="CP001390">
    <property type="protein sequence ID" value="ACM20510.1"/>
    <property type="molecule type" value="Genomic_DNA"/>
</dbReference>
<dbReference type="RefSeq" id="WP_012647239.1">
    <property type="nucleotide sequence ID" value="NC_011979.1"/>
</dbReference>
<dbReference type="SMR" id="B9M914"/>
<dbReference type="STRING" id="316067.Geob_2156"/>
<dbReference type="KEGG" id="geo:Geob_2156"/>
<dbReference type="eggNOG" id="COG1160">
    <property type="taxonomic scope" value="Bacteria"/>
</dbReference>
<dbReference type="HOGENOM" id="CLU_016077_6_2_7"/>
<dbReference type="OrthoDB" id="9805918at2"/>
<dbReference type="Proteomes" id="UP000007721">
    <property type="component" value="Chromosome"/>
</dbReference>
<dbReference type="GO" id="GO:0005525">
    <property type="term" value="F:GTP binding"/>
    <property type="evidence" value="ECO:0007669"/>
    <property type="project" value="UniProtKB-UniRule"/>
</dbReference>
<dbReference type="GO" id="GO:0043022">
    <property type="term" value="F:ribosome binding"/>
    <property type="evidence" value="ECO:0007669"/>
    <property type="project" value="TreeGrafter"/>
</dbReference>
<dbReference type="GO" id="GO:0042254">
    <property type="term" value="P:ribosome biogenesis"/>
    <property type="evidence" value="ECO:0007669"/>
    <property type="project" value="UniProtKB-KW"/>
</dbReference>
<dbReference type="CDD" id="cd01894">
    <property type="entry name" value="EngA1"/>
    <property type="match status" value="1"/>
</dbReference>
<dbReference type="CDD" id="cd01895">
    <property type="entry name" value="EngA2"/>
    <property type="match status" value="1"/>
</dbReference>
<dbReference type="FunFam" id="3.30.300.20:FF:000004">
    <property type="entry name" value="GTPase Der"/>
    <property type="match status" value="1"/>
</dbReference>
<dbReference type="FunFam" id="3.40.50.300:FF:000040">
    <property type="entry name" value="GTPase Der"/>
    <property type="match status" value="1"/>
</dbReference>
<dbReference type="FunFam" id="3.40.50.300:FF:000057">
    <property type="entry name" value="GTPase Der"/>
    <property type="match status" value="1"/>
</dbReference>
<dbReference type="Gene3D" id="3.30.300.20">
    <property type="match status" value="1"/>
</dbReference>
<dbReference type="Gene3D" id="3.40.50.300">
    <property type="entry name" value="P-loop containing nucleotide triphosphate hydrolases"/>
    <property type="match status" value="2"/>
</dbReference>
<dbReference type="HAMAP" id="MF_00195">
    <property type="entry name" value="GTPase_Der"/>
    <property type="match status" value="1"/>
</dbReference>
<dbReference type="InterPro" id="IPR031166">
    <property type="entry name" value="G_ENGA"/>
</dbReference>
<dbReference type="InterPro" id="IPR006073">
    <property type="entry name" value="GTP-bd"/>
</dbReference>
<dbReference type="InterPro" id="IPR016484">
    <property type="entry name" value="GTPase_Der"/>
</dbReference>
<dbReference type="InterPro" id="IPR032859">
    <property type="entry name" value="KH_dom-like"/>
</dbReference>
<dbReference type="InterPro" id="IPR015946">
    <property type="entry name" value="KH_dom-like_a/b"/>
</dbReference>
<dbReference type="InterPro" id="IPR027417">
    <property type="entry name" value="P-loop_NTPase"/>
</dbReference>
<dbReference type="InterPro" id="IPR005225">
    <property type="entry name" value="Small_GTP-bd"/>
</dbReference>
<dbReference type="NCBIfam" id="TIGR03594">
    <property type="entry name" value="GTPase_EngA"/>
    <property type="match status" value="1"/>
</dbReference>
<dbReference type="NCBIfam" id="TIGR00231">
    <property type="entry name" value="small_GTP"/>
    <property type="match status" value="2"/>
</dbReference>
<dbReference type="PANTHER" id="PTHR43834">
    <property type="entry name" value="GTPASE DER"/>
    <property type="match status" value="1"/>
</dbReference>
<dbReference type="PANTHER" id="PTHR43834:SF6">
    <property type="entry name" value="GTPASE DER"/>
    <property type="match status" value="1"/>
</dbReference>
<dbReference type="Pfam" id="PF14714">
    <property type="entry name" value="KH_dom-like"/>
    <property type="match status" value="1"/>
</dbReference>
<dbReference type="Pfam" id="PF01926">
    <property type="entry name" value="MMR_HSR1"/>
    <property type="match status" value="2"/>
</dbReference>
<dbReference type="PIRSF" id="PIRSF006485">
    <property type="entry name" value="GTP-binding_EngA"/>
    <property type="match status" value="1"/>
</dbReference>
<dbReference type="PRINTS" id="PR00326">
    <property type="entry name" value="GTP1OBG"/>
</dbReference>
<dbReference type="SUPFAM" id="SSF52540">
    <property type="entry name" value="P-loop containing nucleoside triphosphate hydrolases"/>
    <property type="match status" value="2"/>
</dbReference>
<dbReference type="PROSITE" id="PS51712">
    <property type="entry name" value="G_ENGA"/>
    <property type="match status" value="2"/>
</dbReference>
<gene>
    <name evidence="1" type="primary">der</name>
    <name type="synonym">engA</name>
    <name type="ordered locus">Geob_2156</name>
</gene>
<name>DER_GEODF</name>
<feature type="chain" id="PRO_1000124359" description="GTPase Der">
    <location>
        <begin position="1"/>
        <end position="441"/>
    </location>
</feature>
<feature type="domain" description="EngA-type G 1">
    <location>
        <begin position="3"/>
        <end position="167"/>
    </location>
</feature>
<feature type="domain" description="EngA-type G 2">
    <location>
        <begin position="176"/>
        <end position="351"/>
    </location>
</feature>
<feature type="domain" description="KH-like" evidence="1">
    <location>
        <begin position="352"/>
        <end position="436"/>
    </location>
</feature>
<feature type="binding site" evidence="1">
    <location>
        <begin position="9"/>
        <end position="16"/>
    </location>
    <ligand>
        <name>GTP</name>
        <dbReference type="ChEBI" id="CHEBI:37565"/>
        <label>1</label>
    </ligand>
</feature>
<feature type="binding site" evidence="1">
    <location>
        <begin position="56"/>
        <end position="60"/>
    </location>
    <ligand>
        <name>GTP</name>
        <dbReference type="ChEBI" id="CHEBI:37565"/>
        <label>1</label>
    </ligand>
</feature>
<feature type="binding site" evidence="1">
    <location>
        <begin position="119"/>
        <end position="122"/>
    </location>
    <ligand>
        <name>GTP</name>
        <dbReference type="ChEBI" id="CHEBI:37565"/>
        <label>1</label>
    </ligand>
</feature>
<feature type="binding site" evidence="1">
    <location>
        <begin position="182"/>
        <end position="189"/>
    </location>
    <ligand>
        <name>GTP</name>
        <dbReference type="ChEBI" id="CHEBI:37565"/>
        <label>2</label>
    </ligand>
</feature>
<feature type="binding site" evidence="1">
    <location>
        <begin position="229"/>
        <end position="233"/>
    </location>
    <ligand>
        <name>GTP</name>
        <dbReference type="ChEBI" id="CHEBI:37565"/>
        <label>2</label>
    </ligand>
</feature>
<feature type="binding site" evidence="1">
    <location>
        <begin position="294"/>
        <end position="297"/>
    </location>
    <ligand>
        <name>GTP</name>
        <dbReference type="ChEBI" id="CHEBI:37565"/>
        <label>2</label>
    </ligand>
</feature>
<proteinExistence type="inferred from homology"/>
<keyword id="KW-0342">GTP-binding</keyword>
<keyword id="KW-0547">Nucleotide-binding</keyword>
<keyword id="KW-1185">Reference proteome</keyword>
<keyword id="KW-0677">Repeat</keyword>
<keyword id="KW-0690">Ribosome biogenesis</keyword>